<gene>
    <name evidence="1" type="primary">darP</name>
    <name type="ordered locus">STM4437</name>
</gene>
<protein>
    <recommendedName>
        <fullName evidence="1">Dual-action ribosomal maturation protein DarP</fullName>
    </recommendedName>
    <alternativeName>
        <fullName evidence="1">Large ribosomal subunit assembly factor DarP</fullName>
    </alternativeName>
</protein>
<reference key="1">
    <citation type="journal article" date="2001" name="Nature">
        <title>Complete genome sequence of Salmonella enterica serovar Typhimurium LT2.</title>
        <authorList>
            <person name="McClelland M."/>
            <person name="Sanderson K.E."/>
            <person name="Spieth J."/>
            <person name="Clifton S.W."/>
            <person name="Latreille P."/>
            <person name="Courtney L."/>
            <person name="Porwollik S."/>
            <person name="Ali J."/>
            <person name="Dante M."/>
            <person name="Du F."/>
            <person name="Hou S."/>
            <person name="Layman D."/>
            <person name="Leonard S."/>
            <person name="Nguyen C."/>
            <person name="Scott K."/>
            <person name="Holmes A."/>
            <person name="Grewal N."/>
            <person name="Mulvaney E."/>
            <person name="Ryan E."/>
            <person name="Sun H."/>
            <person name="Florea L."/>
            <person name="Miller W."/>
            <person name="Stoneking T."/>
            <person name="Nhan M."/>
            <person name="Waterston R."/>
            <person name="Wilson R.K."/>
        </authorList>
    </citation>
    <scope>NUCLEOTIDE SEQUENCE [LARGE SCALE GENOMIC DNA]</scope>
    <source>
        <strain>LT2 / SGSC1412 / ATCC 700720</strain>
    </source>
</reference>
<evidence type="ECO:0000255" key="1">
    <source>
        <dbReference type="HAMAP-Rule" id="MF_00765"/>
    </source>
</evidence>
<keyword id="KW-0963">Cytoplasm</keyword>
<keyword id="KW-1185">Reference proteome</keyword>
<keyword id="KW-0690">Ribosome biogenesis</keyword>
<keyword id="KW-0694">RNA-binding</keyword>
<keyword id="KW-0699">rRNA-binding</keyword>
<proteinExistence type="inferred from homology"/>
<dbReference type="EMBL" id="AE006468">
    <property type="protein sequence ID" value="AAL23257.1"/>
    <property type="molecule type" value="Genomic_DNA"/>
</dbReference>
<dbReference type="SMR" id="P60829"/>
<dbReference type="STRING" id="99287.STM4437"/>
<dbReference type="PaxDb" id="99287-STM4437"/>
<dbReference type="KEGG" id="stm:STM4437"/>
<dbReference type="PATRIC" id="fig|99287.12.peg.4667"/>
<dbReference type="HOGENOM" id="CLU_106757_2_0_6"/>
<dbReference type="OMA" id="NLWPNAD"/>
<dbReference type="PhylomeDB" id="P60829"/>
<dbReference type="BioCyc" id="SENT99287:STM4437-MONOMER"/>
<dbReference type="Proteomes" id="UP000001014">
    <property type="component" value="Chromosome"/>
</dbReference>
<dbReference type="GO" id="GO:0005829">
    <property type="term" value="C:cytosol"/>
    <property type="evidence" value="ECO:0000318"/>
    <property type="project" value="GO_Central"/>
</dbReference>
<dbReference type="GO" id="GO:0043022">
    <property type="term" value="F:ribosome binding"/>
    <property type="evidence" value="ECO:0007669"/>
    <property type="project" value="UniProtKB-UniRule"/>
</dbReference>
<dbReference type="GO" id="GO:0019843">
    <property type="term" value="F:rRNA binding"/>
    <property type="evidence" value="ECO:0007669"/>
    <property type="project" value="UniProtKB-UniRule"/>
</dbReference>
<dbReference type="GO" id="GO:1902626">
    <property type="term" value="P:assembly of large subunit precursor of preribosome"/>
    <property type="evidence" value="ECO:0007669"/>
    <property type="project" value="UniProtKB-UniRule"/>
</dbReference>
<dbReference type="CDD" id="cd16331">
    <property type="entry name" value="YjgA-like"/>
    <property type="match status" value="1"/>
</dbReference>
<dbReference type="FunFam" id="1.10.60.30:FF:000001">
    <property type="entry name" value="UPF0307 protein YjgA"/>
    <property type="match status" value="1"/>
</dbReference>
<dbReference type="FunFam" id="1.10.60.30:FF:000002">
    <property type="entry name" value="UPF0307 protein YjgA"/>
    <property type="match status" value="1"/>
</dbReference>
<dbReference type="Gene3D" id="1.10.60.30">
    <property type="entry name" value="PSPTO4464-like domains"/>
    <property type="match status" value="2"/>
</dbReference>
<dbReference type="HAMAP" id="MF_00765">
    <property type="entry name" value="DarP"/>
    <property type="match status" value="1"/>
</dbReference>
<dbReference type="InterPro" id="IPR006839">
    <property type="entry name" value="DarP"/>
</dbReference>
<dbReference type="InterPro" id="IPR023153">
    <property type="entry name" value="DarP_sf"/>
</dbReference>
<dbReference type="NCBIfam" id="NF003593">
    <property type="entry name" value="PRK05255.1-1"/>
    <property type="match status" value="1"/>
</dbReference>
<dbReference type="PANTHER" id="PTHR38101">
    <property type="entry name" value="UPF0307 PROTEIN YJGA"/>
    <property type="match status" value="1"/>
</dbReference>
<dbReference type="PANTHER" id="PTHR38101:SF1">
    <property type="entry name" value="UPF0307 PROTEIN YJGA"/>
    <property type="match status" value="1"/>
</dbReference>
<dbReference type="Pfam" id="PF04751">
    <property type="entry name" value="DarP"/>
    <property type="match status" value="1"/>
</dbReference>
<dbReference type="PIRSF" id="PIRSF016183">
    <property type="entry name" value="UCP016183"/>
    <property type="match status" value="1"/>
</dbReference>
<dbReference type="SUPFAM" id="SSF158710">
    <property type="entry name" value="PSPTO4464-like"/>
    <property type="match status" value="1"/>
</dbReference>
<organism>
    <name type="scientific">Salmonella typhimurium (strain LT2 / SGSC1412 / ATCC 700720)</name>
    <dbReference type="NCBI Taxonomy" id="99287"/>
    <lineage>
        <taxon>Bacteria</taxon>
        <taxon>Pseudomonadati</taxon>
        <taxon>Pseudomonadota</taxon>
        <taxon>Gammaproteobacteria</taxon>
        <taxon>Enterobacterales</taxon>
        <taxon>Enterobacteriaceae</taxon>
        <taxon>Salmonella</taxon>
    </lineage>
</organism>
<accession>P60829</accession>
<accession>Q8XEZ5</accession>
<feature type="chain" id="PRO_0000208228" description="Dual-action ribosomal maturation protein DarP">
    <location>
        <begin position="1"/>
        <end position="183"/>
    </location>
</feature>
<comment type="function">
    <text evidence="1">Member of a network of 50S ribosomal subunit biogenesis factors which assembles along the 30S-50S interface, preventing incorrect 23S rRNA structures from forming. Promotes peptidyl transferase center (PTC) maturation.</text>
</comment>
<comment type="subcellular location">
    <subcellularLocation>
        <location evidence="1">Cytoplasm</location>
    </subcellularLocation>
    <text evidence="1">Associates with late stage pre-50S ribosomal subunits.</text>
</comment>
<comment type="similarity">
    <text evidence="1">Belongs to the DarP family.</text>
</comment>
<sequence length="183" mass="21392">MTKQPEDWLDDVPGDDIEDEDDEIIWVSKSEIKRDAEELKRLGAELVDLGKNALDKIPLDADLRDAIELAQRIKMEGRRRQLQLIGKMLRQRDVEPIRQALDKLKNRHNQQVVLFHKLEHLRDRLIVEGDDAVAEVLTLWPHADRQQLRSLIRNAKKEKEGNKPPKSARQIFQYLRELAENEG</sequence>
<name>DARP_SALTY</name>